<organism>
    <name type="scientific">Azorhizobium caulinodans (strain ATCC 43989 / DSM 5975 / JCM 20966 / LMG 6465 / NBRC 14845 / NCIMB 13405 / ORS 571)</name>
    <dbReference type="NCBI Taxonomy" id="438753"/>
    <lineage>
        <taxon>Bacteria</taxon>
        <taxon>Pseudomonadati</taxon>
        <taxon>Pseudomonadota</taxon>
        <taxon>Alphaproteobacteria</taxon>
        <taxon>Hyphomicrobiales</taxon>
        <taxon>Xanthobacteraceae</taxon>
        <taxon>Azorhizobium</taxon>
    </lineage>
</organism>
<accession>A8HS18</accession>
<gene>
    <name evidence="1" type="primary">atpH</name>
    <name type="ordered locus">AZC_4128</name>
</gene>
<comment type="function">
    <text evidence="1">F(1)F(0) ATP synthase produces ATP from ADP in the presence of a proton or sodium gradient. F-type ATPases consist of two structural domains, F(1) containing the extramembraneous catalytic core and F(0) containing the membrane proton channel, linked together by a central stalk and a peripheral stalk. During catalysis, ATP synthesis in the catalytic domain of F(1) is coupled via a rotary mechanism of the central stalk subunits to proton translocation.</text>
</comment>
<comment type="function">
    <text evidence="1">This protein is part of the stalk that links CF(0) to CF(1). It either transmits conformational changes from CF(0) to CF(1) or is implicated in proton conduction.</text>
</comment>
<comment type="subunit">
    <text evidence="1">F-type ATPases have 2 components, F(1) - the catalytic core - and F(0) - the membrane proton channel. F(1) has five subunits: alpha(3), beta(3), gamma(1), delta(1), epsilon(1). F(0) has three main subunits: a(1), b(2) and c(10-14). The alpha and beta chains form an alternating ring which encloses part of the gamma chain. F(1) is attached to F(0) by a central stalk formed by the gamma and epsilon chains, while a peripheral stalk is formed by the delta and b chains.</text>
</comment>
<comment type="subcellular location">
    <subcellularLocation>
        <location evidence="1">Cell inner membrane</location>
        <topology evidence="1">Peripheral membrane protein</topology>
    </subcellularLocation>
</comment>
<comment type="similarity">
    <text evidence="1">Belongs to the ATPase delta chain family.</text>
</comment>
<reference key="1">
    <citation type="submission" date="2007-04" db="EMBL/GenBank/DDBJ databases">
        <title>Complete genome sequence of the nitrogen-fixing bacterium Azorhizobium caulinodans ORS571.</title>
        <authorList>
            <person name="Lee K.B."/>
            <person name="Backer P.D."/>
            <person name="Aono T."/>
            <person name="Liu C.T."/>
            <person name="Suzuki S."/>
            <person name="Suzuki T."/>
            <person name="Kaneko T."/>
            <person name="Yamada M."/>
            <person name="Tabata S."/>
            <person name="Kupfer D.M."/>
            <person name="Najar F.Z."/>
            <person name="Wiley G.B."/>
            <person name="Roe B."/>
            <person name="Binnewies T."/>
            <person name="Ussery D."/>
            <person name="Vereecke D."/>
            <person name="Gevers D."/>
            <person name="Holsters M."/>
            <person name="Oyaizu H."/>
        </authorList>
    </citation>
    <scope>NUCLEOTIDE SEQUENCE [LARGE SCALE GENOMIC DNA]</scope>
    <source>
        <strain>ATCC 43989 / DSM 5975 / JCM 20966 / LMG 6465 / NBRC 14845 / NCIMB 13405 / ORS 571</strain>
    </source>
</reference>
<name>ATPD_AZOC5</name>
<protein>
    <recommendedName>
        <fullName evidence="1">ATP synthase subunit delta</fullName>
    </recommendedName>
    <alternativeName>
        <fullName evidence="1">ATP synthase F(1) sector subunit delta</fullName>
    </alternativeName>
    <alternativeName>
        <fullName evidence="1">F-type ATPase subunit delta</fullName>
        <shortName evidence="1">F-ATPase subunit delta</shortName>
    </alternativeName>
</protein>
<evidence type="ECO:0000255" key="1">
    <source>
        <dbReference type="HAMAP-Rule" id="MF_01416"/>
    </source>
</evidence>
<dbReference type="EMBL" id="AP009384">
    <property type="protein sequence ID" value="BAF90126.1"/>
    <property type="molecule type" value="Genomic_DNA"/>
</dbReference>
<dbReference type="SMR" id="A8HS18"/>
<dbReference type="STRING" id="438753.AZC_4128"/>
<dbReference type="KEGG" id="azc:AZC_4128"/>
<dbReference type="eggNOG" id="COG0712">
    <property type="taxonomic scope" value="Bacteria"/>
</dbReference>
<dbReference type="HOGENOM" id="CLU_085114_0_1_5"/>
<dbReference type="Proteomes" id="UP000000270">
    <property type="component" value="Chromosome"/>
</dbReference>
<dbReference type="GO" id="GO:0005886">
    <property type="term" value="C:plasma membrane"/>
    <property type="evidence" value="ECO:0007669"/>
    <property type="project" value="UniProtKB-SubCell"/>
</dbReference>
<dbReference type="GO" id="GO:0045259">
    <property type="term" value="C:proton-transporting ATP synthase complex"/>
    <property type="evidence" value="ECO:0007669"/>
    <property type="project" value="UniProtKB-KW"/>
</dbReference>
<dbReference type="GO" id="GO:0046933">
    <property type="term" value="F:proton-transporting ATP synthase activity, rotational mechanism"/>
    <property type="evidence" value="ECO:0007669"/>
    <property type="project" value="UniProtKB-UniRule"/>
</dbReference>
<dbReference type="Gene3D" id="1.10.520.20">
    <property type="entry name" value="N-terminal domain of the delta subunit of the F1F0-ATP synthase"/>
    <property type="match status" value="1"/>
</dbReference>
<dbReference type="HAMAP" id="MF_01416">
    <property type="entry name" value="ATP_synth_delta_bact"/>
    <property type="match status" value="1"/>
</dbReference>
<dbReference type="InterPro" id="IPR026015">
    <property type="entry name" value="ATP_synth_OSCP/delta_N_sf"/>
</dbReference>
<dbReference type="InterPro" id="IPR020781">
    <property type="entry name" value="ATPase_OSCP/d_CS"/>
</dbReference>
<dbReference type="InterPro" id="IPR000711">
    <property type="entry name" value="ATPase_OSCP/dsu"/>
</dbReference>
<dbReference type="NCBIfam" id="TIGR01145">
    <property type="entry name" value="ATP_synt_delta"/>
    <property type="match status" value="1"/>
</dbReference>
<dbReference type="NCBIfam" id="NF004402">
    <property type="entry name" value="PRK05758.2-2"/>
    <property type="match status" value="1"/>
</dbReference>
<dbReference type="NCBIfam" id="NF004406">
    <property type="entry name" value="PRK05758.3-2"/>
    <property type="match status" value="1"/>
</dbReference>
<dbReference type="PANTHER" id="PTHR11910">
    <property type="entry name" value="ATP SYNTHASE DELTA CHAIN"/>
    <property type="match status" value="1"/>
</dbReference>
<dbReference type="Pfam" id="PF00213">
    <property type="entry name" value="OSCP"/>
    <property type="match status" value="1"/>
</dbReference>
<dbReference type="PRINTS" id="PR00125">
    <property type="entry name" value="ATPASEDELTA"/>
</dbReference>
<dbReference type="SUPFAM" id="SSF47928">
    <property type="entry name" value="N-terminal domain of the delta subunit of the F1F0-ATP synthase"/>
    <property type="match status" value="1"/>
</dbReference>
<dbReference type="PROSITE" id="PS00389">
    <property type="entry name" value="ATPASE_DELTA"/>
    <property type="match status" value="1"/>
</dbReference>
<proteinExistence type="inferred from homology"/>
<feature type="chain" id="PRO_1000184643" description="ATP synthase subunit delta">
    <location>
        <begin position="1"/>
        <end position="186"/>
    </location>
</feature>
<keyword id="KW-0066">ATP synthesis</keyword>
<keyword id="KW-0997">Cell inner membrane</keyword>
<keyword id="KW-1003">Cell membrane</keyword>
<keyword id="KW-0139">CF(1)</keyword>
<keyword id="KW-0375">Hydrogen ion transport</keyword>
<keyword id="KW-0406">Ion transport</keyword>
<keyword id="KW-0472">Membrane</keyword>
<keyword id="KW-1185">Reference proteome</keyword>
<keyword id="KW-0813">Transport</keyword>
<sequence>MRLVETIVSGMAGRYATALFELAEEAGSTDAVAADLDRLKGLIAESADLERLVKSPVFTAEEQVKAVGAVLAAAGITGIAANFVKLVAQNRRLFALPSMFDAFAALVAAKRGQTVAKVTVAEPLNDAHQAALKEALAQQTGKDVSLDVTVDPSILGGLIVKLGSRMVDASLKTKLNSIRHAMKEVR</sequence>